<name>TSAD2_COMTE</name>
<accession>Q9AHG1</accession>
<gene>
    <name type="primary">tsaD2</name>
</gene>
<proteinExistence type="uncertain"/>
<reference key="1">
    <citation type="journal article" date="2001" name="Appl. Environ. Microbiol.">
        <title>Map of the IncP1beta plasmid pTSA encoding the widespread genes (tsa) for p-toluenesulfonate degradation in Comamonas testosteroni T-2.</title>
        <authorList>
            <person name="Tralau T."/>
            <person name="Cook A.M."/>
            <person name="Ruff J."/>
        </authorList>
    </citation>
    <scope>NUCLEOTIDE SEQUENCE [GENOMIC DNA]</scope>
    <scope>LACK OF EXPRESSION</scope>
    <source>
        <strain>DSM 6577 / T-2</strain>
    </source>
</reference>
<reference key="2">
    <citation type="journal article" date="2003" name="Arch. Microbiol.">
        <title>An additional regulator, TsaQ, is involved with TsaR in regulation of transport during the degradation of p-toluenesulfonate in Comamonas testosteroni T-2.</title>
        <authorList>
            <person name="Tralau T."/>
            <person name="Cook A.M."/>
            <person name="Ruff J."/>
        </authorList>
    </citation>
    <scope>NUCLEOTIDE SEQUENCE [GENOMIC DNA]</scope>
    <source>
        <strain>DSM 6577 / T-2</strain>
    </source>
</reference>
<reference key="3">
    <citation type="journal article" date="2004" name="Biochem. J.">
        <title>A novel outer-membrane anion channel (porin) as part of a putatively two-component transport system for 4-toluenesulphonate in Comamonas testosteroni T-2.</title>
        <authorList>
            <person name="Mampel J."/>
            <person name="Maier E."/>
            <person name="Tralau T."/>
            <person name="Ruff J."/>
            <person name="Benz R."/>
            <person name="Cook A.M."/>
        </authorList>
    </citation>
    <scope>NUCLEOTIDE SEQUENCE [GENOMIC DNA]</scope>
    <source>
        <strain>DSM 6577 / T-2</strain>
    </source>
</reference>
<evidence type="ECO:0000250" key="1"/>
<evidence type="ECO:0000255" key="2">
    <source>
        <dbReference type="PROSITE-ProRule" id="PRU10008"/>
    </source>
</evidence>
<evidence type="ECO:0000305" key="3"/>
<evidence type="ECO:0000305" key="4">
    <source>
    </source>
</evidence>
<organism>
    <name type="scientific">Comamonas testosteroni</name>
    <name type="common">Pseudomonas testosteroni</name>
    <dbReference type="NCBI Taxonomy" id="285"/>
    <lineage>
        <taxon>Bacteria</taxon>
        <taxon>Pseudomonadati</taxon>
        <taxon>Pseudomonadota</taxon>
        <taxon>Betaproteobacteria</taxon>
        <taxon>Burkholderiales</taxon>
        <taxon>Comamonadaceae</taxon>
        <taxon>Comamonas</taxon>
    </lineage>
</organism>
<feature type="chain" id="PRO_0000419118" description="Putative 4-(hydroxymethyl)benzenesulfonate dehydrogenase TsaD2">
    <location>
        <begin position="1"/>
        <end position="477"/>
    </location>
</feature>
<feature type="active site" description="Proton acceptor" evidence="2">
    <location>
        <position position="252"/>
    </location>
</feature>
<feature type="active site" description="Nucleophile" evidence="2">
    <location>
        <position position="286"/>
    </location>
</feature>
<feature type="binding site" evidence="1">
    <location>
        <begin position="154"/>
        <end position="155"/>
    </location>
    <ligand>
        <name>NAD(+)</name>
        <dbReference type="ChEBI" id="CHEBI:57540"/>
    </ligand>
</feature>
<feature type="binding site" evidence="1">
    <location>
        <begin position="178"/>
        <end position="181"/>
    </location>
    <ligand>
        <name>NAD(+)</name>
        <dbReference type="ChEBI" id="CHEBI:57540"/>
    </ligand>
</feature>
<feature type="binding site" evidence="1">
    <location>
        <begin position="230"/>
        <end position="231"/>
    </location>
    <ligand>
        <name>NAD(+)</name>
        <dbReference type="ChEBI" id="CHEBI:57540"/>
    </ligand>
</feature>
<feature type="binding site" evidence="1">
    <location>
        <position position="253"/>
    </location>
    <ligand>
        <name>NAD(+)</name>
        <dbReference type="ChEBI" id="CHEBI:57540"/>
    </ligand>
</feature>
<feature type="binding site" evidence="1">
    <location>
        <position position="381"/>
    </location>
    <ligand>
        <name>NAD(+)</name>
        <dbReference type="ChEBI" id="CHEBI:57540"/>
    </ligand>
</feature>
<comment type="function">
    <text evidence="1">Involved in the toluene-4-sulfonate degradation pathway. Does not discriminate between the sulfonate and the carboxyl substituents and can also be involved in the p-toluenecarboxylate degradation pathway (By similarity).</text>
</comment>
<comment type="catalytic activity">
    <reaction>
        <text>4-(hydroxymethyl)benzenesulfonate + NAD(+) = 4-formylbenzenesulfonate + NADH + H(+)</text>
        <dbReference type="Rhea" id="RHEA:24412"/>
        <dbReference type="ChEBI" id="CHEBI:11944"/>
        <dbReference type="ChEBI" id="CHEBI:11987"/>
        <dbReference type="ChEBI" id="CHEBI:15378"/>
        <dbReference type="ChEBI" id="CHEBI:57540"/>
        <dbReference type="ChEBI" id="CHEBI:57945"/>
        <dbReference type="EC" id="1.1.1.257"/>
    </reaction>
</comment>
<comment type="subunit">
    <text evidence="1">Homodimer.</text>
</comment>
<comment type="similarity">
    <text evidence="3">Belongs to the aldehyde dehydrogenase family.</text>
</comment>
<comment type="caution">
    <text evidence="4">Could be the product of a pseudogene. Probably not expressed, due to the absence of promoter-like sequences upstream of the operon tsaMBCD2 (PubMed:11282598).</text>
</comment>
<protein>
    <recommendedName>
        <fullName>Putative 4-(hydroxymethyl)benzenesulfonate dehydrogenase TsaD2</fullName>
        <ecNumber>1.1.1.257</ecNumber>
    </recommendedName>
    <alternativeName>
        <fullName>Toluenesulfonate aldehyde dehydrogenase TsaD</fullName>
    </alternativeName>
</protein>
<sequence>MSTVLYRCPELLIGGEWRPGRHEQRLVVRNPATGEPLDELRLASADDLQLALQTTQQAFEHWRQVPAHERCARLERGVARLRENTERIAHLLTLEQGKTLAEARMECAMAADLIKWYAEEARRVYGRVIPARLPNSRMEVFKFPVGPVAAFSPWNFPLVLSARKLGGAIAAGCSIVLKAAEETPASVAAMVDCLNQELPPGVVQLLYGVPAEVSQALIASPVVRKVTFTGSVPVGRHLAELSARHLKRITLELGGHAPVIVCGDADIARTVNLMVQHKFRNAGQACLAPTRFFVDRRIYGDFVDAFGAATQALRVGAGMAAETQMGPVASARRQAAVQDLIARSVAAGARPVASAVPEAGYFVAPTLLADVPLDAPVMSEEPFGPVACAVPFDSLDQAIAQANHNPYGLAGYLFTDSAKAILAVSERLEVGSLAVNGMGVSVPEAPFGGVKDSGYGSESGTEGMEAFLDTKFMHYVA</sequence>
<keyword id="KW-0058">Aromatic hydrocarbons catabolism</keyword>
<keyword id="KW-0520">NAD</keyword>
<keyword id="KW-0560">Oxidoreductase</keyword>
<keyword id="KW-0614">Plasmid</keyword>
<dbReference type="EC" id="1.1.1.257"/>
<dbReference type="EMBL" id="AH010657">
    <property type="protein sequence ID" value="AAK37995.1"/>
    <property type="molecule type" value="Genomic_DNA"/>
</dbReference>
<dbReference type="SMR" id="Q9AHG1"/>
<dbReference type="GO" id="GO:0018462">
    <property type="term" value="F:4-(hydroxymethyl)benzenesulfonate dehydrogenase activity"/>
    <property type="evidence" value="ECO:0007669"/>
    <property type="project" value="UniProtKB-EC"/>
</dbReference>
<dbReference type="GO" id="GO:0004777">
    <property type="term" value="F:succinate-semialdehyde dehydrogenase (NAD+) activity"/>
    <property type="evidence" value="ECO:0007669"/>
    <property type="project" value="TreeGrafter"/>
</dbReference>
<dbReference type="GO" id="GO:0009450">
    <property type="term" value="P:gamma-aminobutyric acid catabolic process"/>
    <property type="evidence" value="ECO:0007669"/>
    <property type="project" value="TreeGrafter"/>
</dbReference>
<dbReference type="CDD" id="cd07103">
    <property type="entry name" value="ALDH_F5_SSADH_GabD"/>
    <property type="match status" value="1"/>
</dbReference>
<dbReference type="FunFam" id="3.40.605.10:FF:000007">
    <property type="entry name" value="NAD/NADP-dependent betaine aldehyde dehydrogenase"/>
    <property type="match status" value="1"/>
</dbReference>
<dbReference type="Gene3D" id="3.40.605.10">
    <property type="entry name" value="Aldehyde Dehydrogenase, Chain A, domain 1"/>
    <property type="match status" value="1"/>
</dbReference>
<dbReference type="Gene3D" id="3.40.309.10">
    <property type="entry name" value="Aldehyde Dehydrogenase, Chain A, domain 2"/>
    <property type="match status" value="1"/>
</dbReference>
<dbReference type="InterPro" id="IPR016161">
    <property type="entry name" value="Ald_DH/histidinol_DH"/>
</dbReference>
<dbReference type="InterPro" id="IPR016163">
    <property type="entry name" value="Ald_DH_C"/>
</dbReference>
<dbReference type="InterPro" id="IPR016160">
    <property type="entry name" value="Ald_DH_CS_CYS"/>
</dbReference>
<dbReference type="InterPro" id="IPR016162">
    <property type="entry name" value="Ald_DH_N"/>
</dbReference>
<dbReference type="InterPro" id="IPR015590">
    <property type="entry name" value="Aldehyde_DH_dom"/>
</dbReference>
<dbReference type="InterPro" id="IPR050740">
    <property type="entry name" value="Aldehyde_DH_Superfamily"/>
</dbReference>
<dbReference type="PANTHER" id="PTHR43353">
    <property type="entry name" value="SUCCINATE-SEMIALDEHYDE DEHYDROGENASE, MITOCHONDRIAL"/>
    <property type="match status" value="1"/>
</dbReference>
<dbReference type="PANTHER" id="PTHR43353:SF5">
    <property type="entry name" value="SUCCINATE-SEMIALDEHYDE DEHYDROGENASE, MITOCHONDRIAL"/>
    <property type="match status" value="1"/>
</dbReference>
<dbReference type="Pfam" id="PF00171">
    <property type="entry name" value="Aldedh"/>
    <property type="match status" value="1"/>
</dbReference>
<dbReference type="SUPFAM" id="SSF53720">
    <property type="entry name" value="ALDH-like"/>
    <property type="match status" value="1"/>
</dbReference>
<dbReference type="PROSITE" id="PS00070">
    <property type="entry name" value="ALDEHYDE_DEHYDR_CYS"/>
    <property type="match status" value="1"/>
</dbReference>
<geneLocation type="plasmid">
    <name>pTSA</name>
</geneLocation>